<dbReference type="EMBL" id="AJ250425">
    <property type="protein sequence ID" value="CAB65966.1"/>
    <property type="molecule type" value="mRNA"/>
</dbReference>
<dbReference type="EMBL" id="AJ302676">
    <property type="protein sequence ID" value="CAC16410.1"/>
    <property type="molecule type" value="mRNA"/>
</dbReference>
<dbReference type="RefSeq" id="NP_076447.1">
    <property type="nucleotide sequence ID" value="NM_023957.1"/>
</dbReference>
<dbReference type="PDB" id="2DFK">
    <property type="method" value="X-ray"/>
    <property type="resolution" value="2.15 A"/>
    <property type="chains" value="A/C=71-463"/>
</dbReference>
<dbReference type="PDB" id="4MT6">
    <property type="method" value="X-ray"/>
    <property type="resolution" value="5.50 A"/>
    <property type="chains" value="A=1-456"/>
</dbReference>
<dbReference type="PDB" id="4MT7">
    <property type="method" value="X-ray"/>
    <property type="resolution" value="3.50 A"/>
    <property type="chains" value="A=10-493"/>
</dbReference>
<dbReference type="PDBsum" id="2DFK"/>
<dbReference type="PDBsum" id="4MT6"/>
<dbReference type="PDBsum" id="4MT7"/>
<dbReference type="SMR" id="Q9QX73"/>
<dbReference type="FunCoup" id="Q9QX73">
    <property type="interactions" value="1728"/>
</dbReference>
<dbReference type="IntAct" id="Q9QX73">
    <property type="interactions" value="1"/>
</dbReference>
<dbReference type="MINT" id="Q9QX73"/>
<dbReference type="PhosphoSitePlus" id="Q9QX73"/>
<dbReference type="ABCD" id="Q9QX73">
    <property type="antibodies" value="2 sequenced antibodies"/>
</dbReference>
<dbReference type="GeneID" id="66013"/>
<dbReference type="KEGG" id="rno:66013"/>
<dbReference type="AGR" id="RGD:620719"/>
<dbReference type="CTD" id="23229"/>
<dbReference type="RGD" id="620719">
    <property type="gene designation" value="Arhgef9"/>
</dbReference>
<dbReference type="InParanoid" id="Q9QX73"/>
<dbReference type="PhylomeDB" id="Q9QX73"/>
<dbReference type="Reactome" id="R-RNO-193648">
    <property type="pathway name" value="NRAGE signals death through JNK"/>
</dbReference>
<dbReference type="Reactome" id="R-RNO-416482">
    <property type="pathway name" value="G alpha (12/13) signalling events"/>
</dbReference>
<dbReference type="Reactome" id="R-RNO-9013148">
    <property type="pathway name" value="CDC42 GTPase cycle"/>
</dbReference>
<dbReference type="Reactome" id="R-RNO-9013406">
    <property type="pathway name" value="RHOQ GTPase cycle"/>
</dbReference>
<dbReference type="Reactome" id="R-RNO-977443">
    <property type="pathway name" value="GABA receptor activation"/>
</dbReference>
<dbReference type="EvolutionaryTrace" id="Q9QX73"/>
<dbReference type="PRO" id="PR:Q9QX73"/>
<dbReference type="Proteomes" id="UP000002494">
    <property type="component" value="Unplaced"/>
</dbReference>
<dbReference type="GO" id="GO:0005938">
    <property type="term" value="C:cell cortex"/>
    <property type="evidence" value="ECO:0000314"/>
    <property type="project" value="RGD"/>
</dbReference>
<dbReference type="GO" id="GO:0005829">
    <property type="term" value="C:cytosol"/>
    <property type="evidence" value="ECO:0000318"/>
    <property type="project" value="GO_Central"/>
</dbReference>
<dbReference type="GO" id="GO:0098982">
    <property type="term" value="C:GABA-ergic synapse"/>
    <property type="evidence" value="ECO:0000314"/>
    <property type="project" value="SynGO"/>
</dbReference>
<dbReference type="GO" id="GO:0098690">
    <property type="term" value="C:glycinergic synapse"/>
    <property type="evidence" value="ECO:0000314"/>
    <property type="project" value="SynGO"/>
</dbReference>
<dbReference type="GO" id="GO:0005886">
    <property type="term" value="C:plasma membrane"/>
    <property type="evidence" value="ECO:0007669"/>
    <property type="project" value="GOC"/>
</dbReference>
<dbReference type="GO" id="GO:0014069">
    <property type="term" value="C:postsynaptic density"/>
    <property type="evidence" value="ECO:0000250"/>
    <property type="project" value="UniProtKB"/>
</dbReference>
<dbReference type="GO" id="GO:0099572">
    <property type="term" value="C:postsynaptic specialization"/>
    <property type="evidence" value="ECO:0000314"/>
    <property type="project" value="SynGO"/>
</dbReference>
<dbReference type="GO" id="GO:0005085">
    <property type="term" value="F:guanyl-nucleotide exchange factor activity"/>
    <property type="evidence" value="ECO:0000318"/>
    <property type="project" value="GO_Central"/>
</dbReference>
<dbReference type="GO" id="GO:0043113">
    <property type="term" value="P:receptor clustering"/>
    <property type="evidence" value="ECO:0000314"/>
    <property type="project" value="RGD"/>
</dbReference>
<dbReference type="GO" id="GO:0099150">
    <property type="term" value="P:regulation of postsynaptic specialization assembly"/>
    <property type="evidence" value="ECO:0000266"/>
    <property type="project" value="RGD"/>
</dbReference>
<dbReference type="CDD" id="cd01224">
    <property type="entry name" value="PH_Collybistin_ASEF"/>
    <property type="match status" value="1"/>
</dbReference>
<dbReference type="CDD" id="cd00160">
    <property type="entry name" value="RhoGEF"/>
    <property type="match status" value="1"/>
</dbReference>
<dbReference type="CDD" id="cd11975">
    <property type="entry name" value="SH3_ARHGEF9"/>
    <property type="match status" value="1"/>
</dbReference>
<dbReference type="FunFam" id="1.20.900.10:FF:000002">
    <property type="entry name" value="Rho guanine nucleotide exchange factor 9"/>
    <property type="match status" value="1"/>
</dbReference>
<dbReference type="FunFam" id="2.30.29.30:FF:000015">
    <property type="entry name" value="Rho guanine nucleotide exchange factor 9"/>
    <property type="match status" value="1"/>
</dbReference>
<dbReference type="FunFam" id="2.30.30.40:FF:000037">
    <property type="entry name" value="Rho guanine nucleotide exchange factor 9"/>
    <property type="match status" value="1"/>
</dbReference>
<dbReference type="Gene3D" id="1.20.900.10">
    <property type="entry name" value="Dbl homology (DH) domain"/>
    <property type="match status" value="1"/>
</dbReference>
<dbReference type="Gene3D" id="2.30.29.30">
    <property type="entry name" value="Pleckstrin-homology domain (PH domain)/Phosphotyrosine-binding domain (PTB)"/>
    <property type="match status" value="1"/>
</dbReference>
<dbReference type="Gene3D" id="2.30.30.40">
    <property type="entry name" value="SH3 Domains"/>
    <property type="match status" value="1"/>
</dbReference>
<dbReference type="IDEAL" id="IID50103"/>
<dbReference type="InterPro" id="IPR035728">
    <property type="entry name" value="ARHGEF9_SH3"/>
</dbReference>
<dbReference type="InterPro" id="IPR035899">
    <property type="entry name" value="DBL_dom_sf"/>
</dbReference>
<dbReference type="InterPro" id="IPR000219">
    <property type="entry name" value="DH_dom"/>
</dbReference>
<dbReference type="InterPro" id="IPR011993">
    <property type="entry name" value="PH-like_dom_sf"/>
</dbReference>
<dbReference type="InterPro" id="IPR001849">
    <property type="entry name" value="PH_domain"/>
</dbReference>
<dbReference type="InterPro" id="IPR036028">
    <property type="entry name" value="SH3-like_dom_sf"/>
</dbReference>
<dbReference type="InterPro" id="IPR001452">
    <property type="entry name" value="SH3_domain"/>
</dbReference>
<dbReference type="InterPro" id="IPR055251">
    <property type="entry name" value="SOS1_NGEF_PH"/>
</dbReference>
<dbReference type="PANTHER" id="PTHR47544">
    <property type="entry name" value="RHO GUANINE NUCLEOTIDE EXCHANGE FACTOR 4"/>
    <property type="match status" value="1"/>
</dbReference>
<dbReference type="PANTHER" id="PTHR47544:SF4">
    <property type="entry name" value="RHO GUANINE NUCLEOTIDE EXCHANGE FACTOR 9"/>
    <property type="match status" value="1"/>
</dbReference>
<dbReference type="Pfam" id="PF00621">
    <property type="entry name" value="RhoGEF"/>
    <property type="match status" value="1"/>
</dbReference>
<dbReference type="Pfam" id="PF07653">
    <property type="entry name" value="SH3_2"/>
    <property type="match status" value="1"/>
</dbReference>
<dbReference type="Pfam" id="PF22697">
    <property type="entry name" value="SOS1_NGEF_PH"/>
    <property type="match status" value="1"/>
</dbReference>
<dbReference type="SMART" id="SM00233">
    <property type="entry name" value="PH"/>
    <property type="match status" value="1"/>
</dbReference>
<dbReference type="SMART" id="SM00325">
    <property type="entry name" value="RhoGEF"/>
    <property type="match status" value="1"/>
</dbReference>
<dbReference type="SMART" id="SM00326">
    <property type="entry name" value="SH3"/>
    <property type="match status" value="1"/>
</dbReference>
<dbReference type="SUPFAM" id="SSF48065">
    <property type="entry name" value="DBL homology domain (DH-domain)"/>
    <property type="match status" value="1"/>
</dbReference>
<dbReference type="SUPFAM" id="SSF50729">
    <property type="entry name" value="PH domain-like"/>
    <property type="match status" value="1"/>
</dbReference>
<dbReference type="SUPFAM" id="SSF50044">
    <property type="entry name" value="SH3-domain"/>
    <property type="match status" value="1"/>
</dbReference>
<dbReference type="PROSITE" id="PS50010">
    <property type="entry name" value="DH_2"/>
    <property type="match status" value="1"/>
</dbReference>
<dbReference type="PROSITE" id="PS50003">
    <property type="entry name" value="PH_DOMAIN"/>
    <property type="match status" value="1"/>
</dbReference>
<dbReference type="PROSITE" id="PS50002">
    <property type="entry name" value="SH3"/>
    <property type="match status" value="1"/>
</dbReference>
<keyword id="KW-0002">3D-structure</keyword>
<keyword id="KW-0025">Alternative splicing</keyword>
<keyword id="KW-0963">Cytoplasm</keyword>
<keyword id="KW-0344">Guanine-nucleotide releasing factor</keyword>
<keyword id="KW-1185">Reference proteome</keyword>
<keyword id="KW-0728">SH3 domain</keyword>
<keyword id="KW-0770">Synapse</keyword>
<feature type="chain" id="PRO_0000253898" description="Rho guanine nucleotide exchange factor 9">
    <location>
        <begin position="1"/>
        <end position="493"/>
    </location>
</feature>
<feature type="domain" description="SH3" evidence="4">
    <location>
        <begin position="15"/>
        <end position="74"/>
    </location>
</feature>
<feature type="domain" description="DH" evidence="2">
    <location>
        <begin position="110"/>
        <end position="294"/>
    </location>
</feature>
<feature type="domain" description="PH" evidence="3">
    <location>
        <begin position="325"/>
        <end position="432"/>
    </location>
</feature>
<feature type="region of interest" description="Interaction with GPHN">
    <location>
        <begin position="107"/>
        <end position="117"/>
    </location>
</feature>
<feature type="region of interest" description="Disordered" evidence="5">
    <location>
        <begin position="453"/>
        <end position="473"/>
    </location>
</feature>
<feature type="splice variant" id="VSP_021147" description="In isoform 2." evidence="11">
    <location>
        <begin position="12"/>
        <end position="71"/>
    </location>
</feature>
<feature type="splice variant" id="VSP_021148" description="In isoform 2." evidence="11">
    <original>GRVGEEENQSLELKRACEVLQRLWSPGKKS</original>
    <variation>VTQRKWHY</variation>
    <location>
        <begin position="464"/>
        <end position="493"/>
    </location>
</feature>
<feature type="mutagenesis site" description="No effect on formation of GPHN clusters; when associated with A-108 and A-117." evidence="7 9">
    <original>R</original>
    <variation>A</variation>
    <location>
        <position position="107"/>
    </location>
</feature>
<feature type="mutagenesis site" description="No effect on GPHN clusters; when associated with A-107 and A-117." evidence="7 9">
    <original>D</original>
    <variation>A</variation>
    <location>
        <position position="108"/>
    </location>
</feature>
<feature type="mutagenesis site" description="Loss of formation of GPHN clusters." evidence="7 9">
    <original>R</original>
    <variation>A</variation>
    <location>
        <position position="111"/>
    </location>
</feature>
<feature type="mutagenesis site" description="No effect on GPHN clusters; when associated with A-107 and A-108." evidence="7 9">
    <original>E</original>
    <variation>A</variation>
    <location>
        <position position="117"/>
    </location>
</feature>
<feature type="mutagenesis site" description="Defects in binding to phosphatidylinositol-3-phosphate and in formation of GPHN clusters." evidence="10">
    <original>R</original>
    <variation>H</variation>
    <location>
        <position position="297"/>
    </location>
</feature>
<feature type="helix" evidence="12">
    <location>
        <begin position="107"/>
        <end position="135"/>
    </location>
</feature>
<feature type="helix" evidence="12">
    <location>
        <begin position="137"/>
        <end position="142"/>
    </location>
</feature>
<feature type="turn" evidence="12">
    <location>
        <begin position="144"/>
        <end position="146"/>
    </location>
</feature>
<feature type="helix" evidence="12">
    <location>
        <begin position="149"/>
        <end position="156"/>
    </location>
</feature>
<feature type="helix" evidence="12">
    <location>
        <begin position="159"/>
        <end position="176"/>
    </location>
</feature>
<feature type="helix" evidence="12">
    <location>
        <begin position="182"/>
        <end position="184"/>
    </location>
</feature>
<feature type="helix" evidence="12">
    <location>
        <begin position="188"/>
        <end position="193"/>
    </location>
</feature>
<feature type="turn" evidence="12">
    <location>
        <begin position="194"/>
        <end position="196"/>
    </location>
</feature>
<feature type="helix" evidence="12">
    <location>
        <begin position="197"/>
        <end position="199"/>
    </location>
</feature>
<feature type="helix" evidence="12">
    <location>
        <begin position="200"/>
        <end position="218"/>
    </location>
</feature>
<feature type="helix" evidence="12">
    <location>
        <begin position="222"/>
        <end position="234"/>
    </location>
</feature>
<feature type="helix" evidence="12">
    <location>
        <begin position="242"/>
        <end position="246"/>
    </location>
</feature>
<feature type="helix" evidence="12">
    <location>
        <begin position="248"/>
        <end position="265"/>
    </location>
</feature>
<feature type="helix" evidence="12">
    <location>
        <begin position="274"/>
        <end position="299"/>
    </location>
</feature>
<feature type="helix" evidence="12">
    <location>
        <begin position="301"/>
        <end position="310"/>
    </location>
</feature>
<feature type="strand" evidence="13">
    <location>
        <begin position="311"/>
        <end position="313"/>
    </location>
</feature>
<feature type="helix" evidence="12">
    <location>
        <begin position="319"/>
        <end position="321"/>
    </location>
</feature>
<feature type="strand" evidence="12">
    <location>
        <begin position="326"/>
        <end position="337"/>
    </location>
</feature>
<feature type="strand" evidence="12">
    <location>
        <begin position="343"/>
        <end position="350"/>
    </location>
</feature>
<feature type="strand" evidence="12">
    <location>
        <begin position="353"/>
        <end position="359"/>
    </location>
</feature>
<feature type="strand" evidence="12">
    <location>
        <begin position="367"/>
        <end position="374"/>
    </location>
</feature>
<feature type="helix" evidence="12">
    <location>
        <begin position="375"/>
        <end position="377"/>
    </location>
</feature>
<feature type="strand" evidence="12">
    <location>
        <begin position="378"/>
        <end position="382"/>
    </location>
</feature>
<feature type="strand" evidence="12">
    <location>
        <begin position="385"/>
        <end position="387"/>
    </location>
</feature>
<feature type="strand" evidence="12">
    <location>
        <begin position="389"/>
        <end position="391"/>
    </location>
</feature>
<feature type="strand" evidence="12">
    <location>
        <begin position="394"/>
        <end position="407"/>
    </location>
</feature>
<feature type="strand" evidence="12">
    <location>
        <begin position="409"/>
        <end position="413"/>
    </location>
</feature>
<feature type="helix" evidence="12">
    <location>
        <begin position="417"/>
        <end position="440"/>
    </location>
</feature>
<feature type="helix" evidence="12">
    <location>
        <begin position="446"/>
        <end position="458"/>
    </location>
</feature>
<gene>
    <name type="primary">Arhgef9</name>
</gene>
<sequence length="493" mass="58157">MQWIRGGSGMLITGDSIVSAEAVWDHVTMANRGVAFKAGDVIKVLDASNKDWWWGQIDDEEGWFPASFVRLWVNQEDGVEEGPSDVQNGHLDPNSDCLCLGRPLQNRDQMRANVINEIMSTERHYIKHLKDICEGYLKQCRKRRDMFSDEQLKVIFGNIEDIYRFQMGFVRDLEKQYNNDDPHLSEIGPCFLEHQDGFWIYSEYCNNHLDACMELSKLMKDSRYQHFFEACRLLQQMIDIAIDGFLLTPVQKICKYPLQLAELLKYTAQDHSDYRYVAAALAVMRNVTQQINERKRRLENIDKIAQWQASVLDWEGDDILDRSSELIYTGEMAWIYQPYGRNQQRVFFLFDHQMVLCKKDLIRRDILYYKGRIDMDKYEVIDIEDGRDDDFNVSMKNAFKLHNKETEEVHLFFAKKLEEKIRWLRAFREERKMVQEDEKIGFEISENQKRQAAMTVRKASKQKGRVGEEENQSLELKRACEVLQRLWSPGKKS</sequence>
<name>ARHG9_RAT</name>
<accession>Q9QX73</accession>
<accession>Q9ER22</accession>
<reference key="1">
    <citation type="journal article" date="2000" name="Nat. Neurosci.">
        <title>Collybistin, a newly identified brain-specific GEF, induces submembrane clustering of gephyrin.</title>
        <authorList>
            <person name="Kins S."/>
            <person name="Betz H."/>
            <person name="Kirsch J."/>
        </authorList>
    </citation>
    <scope>NUCLEOTIDE SEQUENCE [MRNA] (ISOFORMS 1 AND 2)</scope>
    <scope>FUNCTION</scope>
    <scope>INTERACTION WITH GPHN</scope>
    <scope>SUBCELLULAR LOCATION</scope>
    <scope>TISSUE SPECIFICITY</scope>
    <source>
        <tissue>Brain</tissue>
    </source>
</reference>
<reference key="2">
    <citation type="journal article" date="2001" name="Biol. Chem.">
        <title>Identification of a gephyrin-binding motif in the GDP/GTP exchange factor collybistin.</title>
        <authorList>
            <person name="Grosskreutz Y."/>
            <person name="Hermann A."/>
            <person name="Kins S."/>
            <person name="Fuhrmann J.C."/>
            <person name="Betz H."/>
            <person name="Kneussel M."/>
        </authorList>
    </citation>
    <scope>FUNCTION</scope>
    <scope>SUBCELLULAR LOCATION</scope>
    <scope>INTERACTION WITH GPHN</scope>
    <scope>MUTAGENESIS OF ARG-107; ASP-108; ARG-111 AND GLU-117</scope>
</reference>
<reference key="3">
    <citation type="journal article" date="2004" name="J. Neurosci.">
        <title>The GDP-GTP exchange factor collybistin: an essential determinant of neuronal gephyrin clustering.</title>
        <authorList>
            <person name="Harvey K."/>
            <person name="Duguid I.C."/>
            <person name="Alldred M.J."/>
            <person name="Beatty S.E."/>
            <person name="Ward H."/>
            <person name="Keep N.H."/>
            <person name="Lingenfelter S.E."/>
            <person name="Pearce B.R."/>
            <person name="Lundgren J."/>
            <person name="Owen M.J."/>
            <person name="Smart T.G."/>
            <person name="Luescher B."/>
            <person name="Rees M.I."/>
            <person name="Harvey R.J."/>
        </authorList>
    </citation>
    <scope>ALTERNATIVE SPLICING</scope>
    <scope>FUNCTION</scope>
    <scope>INTERACTION WITH GPHN</scope>
    <scope>SUBCELLULAR LOCATION</scope>
</reference>
<reference key="4">
    <citation type="journal article" date="2015" name="J. Biol. Chem.">
        <title>Lipid binding defects and perturbed synaptogenic activity of a collybistinR290H mutant that causes epilepsy and intellectual disability.</title>
        <authorList>
            <person name="Papadopoulos T."/>
            <person name="Schemm R."/>
            <person name="Grubmueller H."/>
            <person name="Brose N."/>
        </authorList>
    </citation>
    <scope>MUTAGENESIS OF ARG-297</scope>
</reference>
<reference key="5">
    <citation type="journal article" date="2006" name="J. Mol. Biol.">
        <title>The crystal structure of Cdc42 in complex with collybistin II, a gephyrin-interacting guanine nucleotide exchange factor.</title>
        <authorList>
            <person name="Xiang S."/>
            <person name="Kim E.Y."/>
            <person name="Connelly J.J."/>
            <person name="Nassar N."/>
            <person name="Kirsch J."/>
            <person name="Winking J."/>
            <person name="Schwarz G."/>
            <person name="Schindelin H."/>
        </authorList>
    </citation>
    <scope>X-RAY CRYSTALLOGRAPHY (2.15 ANGSTROMS) OF 10-411 IN COMPLEX WITH CDC42</scope>
    <scope>MUTAGENESIS OF ARG-107; ASP-108; ARG-111 AND GLU-117</scope>
</reference>
<comment type="function">
    <text evidence="6 7 8">Acts as a guanine nucleotide exchange factor (GEF) for CDC42. Promotes formation of GPHN clusters.</text>
</comment>
<comment type="subunit">
    <text evidence="6 7 8 9">Interacts with GPHN.</text>
</comment>
<comment type="subcellular location">
    <subcellularLocation>
        <location evidence="6 7 8">Cytoplasm</location>
    </subcellularLocation>
    <subcellularLocation>
        <location evidence="1">Postsynaptic density</location>
    </subcellularLocation>
</comment>
<comment type="alternative products">
    <event type="alternative splicing"/>
    <isoform>
        <id>Q9QX73-1</id>
        <name>1</name>
        <name>Collybistin I</name>
        <sequence type="displayed"/>
    </isoform>
    <isoform>
        <id>Q9QX73-2</id>
        <name>2</name>
        <name>Collybistin II</name>
        <sequence type="described" ref="VSP_021147 VSP_021148"/>
    </isoform>
    <text>Additional isoforms seem to exist.</text>
</comment>
<comment type="tissue specificity">
    <text evidence="6">Detected in brain, throughout the gray matter. Detected at low levels in heart and skeletal muscle.</text>
</comment>
<protein>
    <recommendedName>
        <fullName>Rho guanine nucleotide exchange factor 9</fullName>
    </recommendedName>
    <alternativeName>
        <fullName>Collybistin</fullName>
    </alternativeName>
    <alternativeName>
        <fullName>Rac/Cdc42 guanine nucleotide exchange factor 9</fullName>
    </alternativeName>
</protein>
<evidence type="ECO:0000250" key="1">
    <source>
        <dbReference type="UniProtKB" id="Q3UTH8"/>
    </source>
</evidence>
<evidence type="ECO:0000255" key="2">
    <source>
        <dbReference type="PROSITE-ProRule" id="PRU00062"/>
    </source>
</evidence>
<evidence type="ECO:0000255" key="3">
    <source>
        <dbReference type="PROSITE-ProRule" id="PRU00145"/>
    </source>
</evidence>
<evidence type="ECO:0000255" key="4">
    <source>
        <dbReference type="PROSITE-ProRule" id="PRU00192"/>
    </source>
</evidence>
<evidence type="ECO:0000256" key="5">
    <source>
        <dbReference type="SAM" id="MobiDB-lite"/>
    </source>
</evidence>
<evidence type="ECO:0000269" key="6">
    <source>
    </source>
</evidence>
<evidence type="ECO:0000269" key="7">
    <source>
    </source>
</evidence>
<evidence type="ECO:0000269" key="8">
    <source>
    </source>
</evidence>
<evidence type="ECO:0000269" key="9">
    <source>
    </source>
</evidence>
<evidence type="ECO:0000269" key="10">
    <source>
    </source>
</evidence>
<evidence type="ECO:0000303" key="11">
    <source>
    </source>
</evidence>
<evidence type="ECO:0007829" key="12">
    <source>
        <dbReference type="PDB" id="2DFK"/>
    </source>
</evidence>
<evidence type="ECO:0007829" key="13">
    <source>
        <dbReference type="PDB" id="4MT7"/>
    </source>
</evidence>
<organism>
    <name type="scientific">Rattus norvegicus</name>
    <name type="common">Rat</name>
    <dbReference type="NCBI Taxonomy" id="10116"/>
    <lineage>
        <taxon>Eukaryota</taxon>
        <taxon>Metazoa</taxon>
        <taxon>Chordata</taxon>
        <taxon>Craniata</taxon>
        <taxon>Vertebrata</taxon>
        <taxon>Euteleostomi</taxon>
        <taxon>Mammalia</taxon>
        <taxon>Eutheria</taxon>
        <taxon>Euarchontoglires</taxon>
        <taxon>Glires</taxon>
        <taxon>Rodentia</taxon>
        <taxon>Myomorpha</taxon>
        <taxon>Muroidea</taxon>
        <taxon>Muridae</taxon>
        <taxon>Murinae</taxon>
        <taxon>Rattus</taxon>
    </lineage>
</organism>
<proteinExistence type="evidence at protein level"/>